<accession>Q6IMI6</accession>
<accession>Q6IMI5</accession>
<organism>
    <name type="scientific">Homo sapiens</name>
    <name type="common">Human</name>
    <dbReference type="NCBI Taxonomy" id="9606"/>
    <lineage>
        <taxon>Eukaryota</taxon>
        <taxon>Metazoa</taxon>
        <taxon>Chordata</taxon>
        <taxon>Craniata</taxon>
        <taxon>Vertebrata</taxon>
        <taxon>Euteleostomi</taxon>
        <taxon>Mammalia</taxon>
        <taxon>Eutheria</taxon>
        <taxon>Euarchontoglires</taxon>
        <taxon>Primates</taxon>
        <taxon>Haplorrhini</taxon>
        <taxon>Catarrhini</taxon>
        <taxon>Hominidae</taxon>
        <taxon>Homo</taxon>
    </lineage>
</organism>
<comment type="function">
    <molecule>Isoform 1</molecule>
    <text evidence="5 6 8">Sulfotransferase that utilizes 3'-phospho-5'-adenylyl sulfate (PAPS) as sulfonate donor. Has sulfotransferase activity towards various substrates, such as bile acids, thyroid hormones and toward xenobiotic compounds such as chloro phenols and hydroxypyrenes. Lithocholic acid appears to be the best substrate among the endogenous compounds tested and 3,3',5,5'-tetrachloro-4,4'-biphenyldiol shows the highest specific activity among the xenobiotic compounds.</text>
</comment>
<comment type="function">
    <molecule>Isoform 2</molecule>
    <text evidence="8">Exhibits weak sulphating activity and only toward chloro phenols (pentachlorophenol and 3,3',5,5'-tetrachloro-4,4'-biphenyldiol).</text>
</comment>
<comment type="catalytic activity">
    <reaction evidence="5 6">
        <text>an alcohol + 3'-phosphoadenylyl sulfate = an alkyl sulfate + adenosine 3',5'-bisphosphate + H(+)</text>
        <dbReference type="Rhea" id="RHEA:22552"/>
        <dbReference type="ChEBI" id="CHEBI:15378"/>
        <dbReference type="ChEBI" id="CHEBI:30879"/>
        <dbReference type="ChEBI" id="CHEBI:58339"/>
        <dbReference type="ChEBI" id="CHEBI:58343"/>
        <dbReference type="ChEBI" id="CHEBI:83414"/>
        <dbReference type="EC" id="2.8.2.2"/>
    </reaction>
</comment>
<comment type="catalytic activity">
    <reaction evidence="5 8">
        <text>a phenol + 3'-phosphoadenylyl sulfate = an aryl sulfate + adenosine 3',5'-bisphosphate + H(+)</text>
        <dbReference type="Rhea" id="RHEA:12164"/>
        <dbReference type="ChEBI" id="CHEBI:15378"/>
        <dbReference type="ChEBI" id="CHEBI:33853"/>
        <dbReference type="ChEBI" id="CHEBI:58339"/>
        <dbReference type="ChEBI" id="CHEBI:58343"/>
        <dbReference type="ChEBI" id="CHEBI:140317"/>
        <dbReference type="EC" id="2.8.2.1"/>
    </reaction>
</comment>
<comment type="catalytic activity">
    <reaction evidence="5 8">
        <text>lithocholate + 3'-phosphoadenylyl sulfate = lithocholate sulfate + adenosine 3',5'-bisphosphate + H(+)</text>
        <dbReference type="Rhea" id="RHEA:51064"/>
        <dbReference type="ChEBI" id="CHEBI:15378"/>
        <dbReference type="ChEBI" id="CHEBI:29744"/>
        <dbReference type="ChEBI" id="CHEBI:58339"/>
        <dbReference type="ChEBI" id="CHEBI:58343"/>
        <dbReference type="ChEBI" id="CHEBI:133940"/>
    </reaction>
    <physiologicalReaction direction="left-to-right" evidence="11">
        <dbReference type="Rhea" id="RHEA:51065"/>
    </physiologicalReaction>
</comment>
<comment type="biophysicochemical properties">
    <kinetics>
        <KM evidence="8">11.29 uM for 3,3',5,5'-tetrachloro-4,4'-biphenyldiol</KM>
        <KM evidence="8">35.17 uM for lithocholate</KM>
        <Vmax evidence="8">5.45 nmol/min/mg enzyme for 3,3',5,5'-tetrachloro-4,4'-biphenyldiol</Vmax>
        <Vmax evidence="8">0.52 nmol/min/mg enzyme for lithocholate</Vmax>
    </kinetics>
</comment>
<comment type="interaction">
    <interactant intactId="EBI-12837366">
        <id>Q6IMI6</id>
    </interactant>
    <interactant intactId="EBI-749441">
        <id>O00204</id>
        <label>SULT2B1</label>
    </interactant>
    <organismsDiffer>false</organismsDiffer>
    <experiments>3</experiments>
</comment>
<comment type="subcellular location">
    <subcellularLocation>
        <location evidence="3">Cytoplasm</location>
    </subcellularLocation>
</comment>
<comment type="alternative products">
    <event type="alternative splicing"/>
    <isoform>
        <id>Q6IMI6-1</id>
        <name>1</name>
        <name>D</name>
        <name evidence="10">SULT1C3d</name>
        <sequence type="displayed"/>
    </isoform>
    <isoform>
        <id>Q6IMI6-2</id>
        <name>2</name>
        <name>A</name>
        <name evidence="10">SULT1C3a</name>
        <sequence type="described" ref="VSP_020583"/>
    </isoform>
    <text evidence="8">Contains alternative exons 7 (7b) and 8 (8b) which may generate three possible splice variants containing sequences corresponding respectively to exons 7a and 8a (SULT1C3a), exons 7a and 8b (SULT1C3c) and exons 7b and 8b (SULT1C3d). So far, it is not known which isoforms are expressed.</text>
</comment>
<comment type="tissue specificity">
    <molecule>Isoform 1</molecule>
    <text evidence="4">Not detectable in any of the tissues tested.</text>
</comment>
<comment type="tissue specificity">
    <molecule>Isoform 2</molecule>
    <text evidence="7">Expressed in the small intestine.</text>
</comment>
<comment type="miscellaneous">
    <text evidence="12">SULT1C3 gene appears to be present only in humans and other primates.</text>
</comment>
<comment type="similarity">
    <text evidence="11">Belongs to the sulfotransferase 1 family.</text>
</comment>
<evidence type="ECO:0000250" key="1"/>
<evidence type="ECO:0000250" key="2">
    <source>
        <dbReference type="UniProtKB" id="Q06520"/>
    </source>
</evidence>
<evidence type="ECO:0000250" key="3">
    <source>
        <dbReference type="UniProtKB" id="Q80VR3"/>
    </source>
</evidence>
<evidence type="ECO:0000269" key="4">
    <source>
    </source>
</evidence>
<evidence type="ECO:0000269" key="5">
    <source>
    </source>
</evidence>
<evidence type="ECO:0000269" key="6">
    <source>
    </source>
</evidence>
<evidence type="ECO:0000269" key="7">
    <source>
    </source>
</evidence>
<evidence type="ECO:0000269" key="8">
    <source>
    </source>
</evidence>
<evidence type="ECO:0000269" key="9">
    <source ref="7"/>
</evidence>
<evidence type="ECO:0000303" key="10">
    <source>
    </source>
</evidence>
<evidence type="ECO:0000305" key="11"/>
<evidence type="ECO:0000305" key="12">
    <source>
    </source>
</evidence>
<evidence type="ECO:0007744" key="13">
    <source>
        <dbReference type="PDB" id="2H8K"/>
    </source>
</evidence>
<evidence type="ECO:0007744" key="14">
    <source>
        <dbReference type="PDB" id="2REO"/>
    </source>
</evidence>
<evidence type="ECO:0007829" key="15">
    <source>
        <dbReference type="PDB" id="2H8K"/>
    </source>
</evidence>
<evidence type="ECO:0007829" key="16">
    <source>
        <dbReference type="PDB" id="2REO"/>
    </source>
</evidence>
<reference key="1">
    <citation type="journal article" date="2005" name="Nature">
        <title>Generation and annotation of the DNA sequences of human chromosomes 2 and 4.</title>
        <authorList>
            <person name="Hillier L.W."/>
            <person name="Graves T.A."/>
            <person name="Fulton R.S."/>
            <person name="Fulton L.A."/>
            <person name="Pepin K.H."/>
            <person name="Minx P."/>
            <person name="Wagner-McPherson C."/>
            <person name="Layman D."/>
            <person name="Wylie K."/>
            <person name="Sekhon M."/>
            <person name="Becker M.C."/>
            <person name="Fewell G.A."/>
            <person name="Delehaunty K.D."/>
            <person name="Miner T.L."/>
            <person name="Nash W.E."/>
            <person name="Kremitzki C."/>
            <person name="Oddy L."/>
            <person name="Du H."/>
            <person name="Sun H."/>
            <person name="Bradshaw-Cordum H."/>
            <person name="Ali J."/>
            <person name="Carter J."/>
            <person name="Cordes M."/>
            <person name="Harris A."/>
            <person name="Isak A."/>
            <person name="van Brunt A."/>
            <person name="Nguyen C."/>
            <person name="Du F."/>
            <person name="Courtney L."/>
            <person name="Kalicki J."/>
            <person name="Ozersky P."/>
            <person name="Abbott S."/>
            <person name="Armstrong J."/>
            <person name="Belter E.A."/>
            <person name="Caruso L."/>
            <person name="Cedroni M."/>
            <person name="Cotton M."/>
            <person name="Davidson T."/>
            <person name="Desai A."/>
            <person name="Elliott G."/>
            <person name="Erb T."/>
            <person name="Fronick C."/>
            <person name="Gaige T."/>
            <person name="Haakenson W."/>
            <person name="Haglund K."/>
            <person name="Holmes A."/>
            <person name="Harkins R."/>
            <person name="Kim K."/>
            <person name="Kruchowski S.S."/>
            <person name="Strong C.M."/>
            <person name="Grewal N."/>
            <person name="Goyea E."/>
            <person name="Hou S."/>
            <person name="Levy A."/>
            <person name="Martinka S."/>
            <person name="Mead K."/>
            <person name="McLellan M.D."/>
            <person name="Meyer R."/>
            <person name="Randall-Maher J."/>
            <person name="Tomlinson C."/>
            <person name="Dauphin-Kohlberg S."/>
            <person name="Kozlowicz-Reilly A."/>
            <person name="Shah N."/>
            <person name="Swearengen-Shahid S."/>
            <person name="Snider J."/>
            <person name="Strong J.T."/>
            <person name="Thompson J."/>
            <person name="Yoakum M."/>
            <person name="Leonard S."/>
            <person name="Pearman C."/>
            <person name="Trani L."/>
            <person name="Radionenko M."/>
            <person name="Waligorski J.E."/>
            <person name="Wang C."/>
            <person name="Rock S.M."/>
            <person name="Tin-Wollam A.-M."/>
            <person name="Maupin R."/>
            <person name="Latreille P."/>
            <person name="Wendl M.C."/>
            <person name="Yang S.-P."/>
            <person name="Pohl C."/>
            <person name="Wallis J.W."/>
            <person name="Spieth J."/>
            <person name="Bieri T.A."/>
            <person name="Berkowicz N."/>
            <person name="Nelson J.O."/>
            <person name="Osborne J."/>
            <person name="Ding L."/>
            <person name="Meyer R."/>
            <person name="Sabo A."/>
            <person name="Shotland Y."/>
            <person name="Sinha P."/>
            <person name="Wohldmann P.E."/>
            <person name="Cook L.L."/>
            <person name="Hickenbotham M.T."/>
            <person name="Eldred J."/>
            <person name="Williams D."/>
            <person name="Jones T.A."/>
            <person name="She X."/>
            <person name="Ciccarelli F.D."/>
            <person name="Izaurralde E."/>
            <person name="Taylor J."/>
            <person name="Schmutz J."/>
            <person name="Myers R.M."/>
            <person name="Cox D.R."/>
            <person name="Huang X."/>
            <person name="McPherson J.D."/>
            <person name="Mardis E.R."/>
            <person name="Clifton S.W."/>
            <person name="Warren W.C."/>
            <person name="Chinwalla A.T."/>
            <person name="Eddy S.R."/>
            <person name="Marra M.A."/>
            <person name="Ovcharenko I."/>
            <person name="Furey T.S."/>
            <person name="Miller W."/>
            <person name="Eichler E.E."/>
            <person name="Bork P."/>
            <person name="Suyama M."/>
            <person name="Torrents D."/>
            <person name="Waterston R.H."/>
            <person name="Wilson R.K."/>
        </authorList>
    </citation>
    <scope>NUCLEOTIDE SEQUENCE [LARGE SCALE GENOMIC DNA]</scope>
</reference>
<reference key="2">
    <citation type="journal article" date="2004" name="Pharmacogenomics J.">
        <title>Human cytosolic sulfotransferase database mining: identification of seven novel genes and pseudogenes.</title>
        <authorList>
            <person name="Freimuth R.R."/>
            <person name="Wiepert M."/>
            <person name="Chute C.G."/>
            <person name="Wieben E.D."/>
            <person name="Weinshilboum R.M."/>
        </authorList>
    </citation>
    <scope>IDENTIFICATION</scope>
    <scope>TISSUE SPECIFICITY</scope>
    <scope>ALTERNATIVE SPLICING</scope>
</reference>
<reference key="3">
    <citation type="journal article" date="2008" name="Food Chem. Toxicol.">
        <title>SULT1C3, an orphan sequence of the human genome, encodes an enzyme activating various promutagens.</title>
        <authorList>
            <person name="Meinl W."/>
            <person name="Donath C."/>
            <person name="Schneider H."/>
            <person name="Sommer Y."/>
            <person name="Glatt H."/>
        </authorList>
    </citation>
    <scope>FUNCTION</scope>
    <scope>CATALYTIC ACTIVITY</scope>
</reference>
<reference key="4">
    <citation type="journal article" date="2014" name="Drug Metab. Dispos.">
        <title>Expression of the orphan cytosolic sulfotransferase SULT1C3 in human intestine: characterization of the transcript variant and implications for function.</title>
        <authorList>
            <person name="Duniec-Dmuchowski Z."/>
            <person name="Rondini E.A."/>
            <person name="Tibbs Z.E."/>
            <person name="Falany C.N."/>
            <person name="Runge-Morris M."/>
            <person name="Kocarek T.A."/>
        </authorList>
    </citation>
    <scope>ALTERNATIVE SPLICING</scope>
    <scope>TISSUE SPECIFICITY</scope>
</reference>
<reference key="5">
    <citation type="journal article" date="2017" name="J. Biochem.">
        <title>Human Cytosolic Sulphotransferase SULT1C3: genomic analysis and functional characterization of splice variant SULT1C3a and SULT1C3d.</title>
        <authorList>
            <person name="Kurogi K."/>
            <person name="Shimohira T."/>
            <person name="Kouriki-Nagatomo H."/>
            <person name="Zhang G."/>
            <person name="Miller E.R."/>
            <person name="Sakakibara Y."/>
            <person name="Suiko M."/>
            <person name="Liu M.C."/>
        </authorList>
    </citation>
    <scope>FUNCTION (ISOFORMS 1 AND 2)</scope>
    <scope>CATALYTIC ACTIVITY (ISOFORMS 1 AND 2)</scope>
    <scope>BIOPHYSICOCHEMICAL PROPERTIES</scope>
    <scope>VARIANTS ARG-179 AND THR-194</scope>
    <scope>SUBSTRATE SPECIFICITY (ISOFORMS 1 AND 2)</scope>
</reference>
<reference key="6">
    <citation type="journal article" date="2007" name="PLoS Biol.">
        <title>Structural and chemical profiling of the human cytosolic sulfotransferases.</title>
        <authorList>
            <person name="Allali-Hassani A."/>
            <person name="Pan P.W."/>
            <person name="Dombrovski L."/>
            <person name="Najmanovich R."/>
            <person name="Tempel W."/>
            <person name="Dong A."/>
            <person name="Loppnau P."/>
            <person name="Martin F."/>
            <person name="Thornton J."/>
            <person name="Edwards A.M."/>
            <person name="Bochkarev A."/>
            <person name="Plotnikov A.N."/>
            <person name="Vedadi M."/>
            <person name="Arrowsmith C.H."/>
        </authorList>
    </citation>
    <scope>X-RAY CRYSTALLOGRAPHY (3.20 ANGSTROMS) IN COMPLEX WITH ADENOSINE-3'-5'-DIPHOSPHATE (PAP)</scope>
    <scope>CATALYTIC ACTIVITY</scope>
    <scope>FUNCTION</scope>
</reference>
<reference key="7">
    <citation type="submission" date="2009-02" db="PDB data bank">
        <title>Crystal structure of human sulfotransferase 1C3 (SULT1C3) in complex with PAP.</title>
        <authorList>
            <consortium name="Structural genomics consortium (SGC)"/>
        </authorList>
    </citation>
    <scope>X-RAY CRYSTALLOGRAPHY (2.65 ANGSTROMS) IN COMPLEX WITH ADENOSINE-3'-5'-DIPHOSPHATE (PAP)</scope>
</reference>
<protein>
    <recommendedName>
        <fullName>Sulfotransferase 1C3</fullName>
        <shortName>ST1C3</shortName>
        <ecNumber evidence="5 8">2.8.2.1</ecNumber>
        <ecNumber evidence="5 6">2.8.2.2</ecNumber>
    </recommendedName>
</protein>
<dbReference type="EC" id="2.8.2.1" evidence="5 8"/>
<dbReference type="EC" id="2.8.2.2" evidence="5 6"/>
<dbReference type="EMBL" id="AC019100">
    <property type="status" value="NOT_ANNOTATED_CDS"/>
    <property type="molecule type" value="Genomic_DNA"/>
</dbReference>
<dbReference type="EMBL" id="BK001432">
    <property type="protein sequence ID" value="DAA01770.1"/>
    <property type="molecule type" value="Genomic_DNA"/>
</dbReference>
<dbReference type="EMBL" id="BK001432">
    <property type="protein sequence ID" value="DAA01771.1"/>
    <property type="molecule type" value="Genomic_DNA"/>
</dbReference>
<dbReference type="CCDS" id="CCDS33267.1">
    <molecule id="Q6IMI6-1"/>
</dbReference>
<dbReference type="CCDS" id="CCDS92828.1">
    <molecule id="Q6IMI6-2"/>
</dbReference>
<dbReference type="RefSeq" id="NP_001008743.1">
    <molecule id="Q6IMI6-1"/>
    <property type="nucleotide sequence ID" value="NM_001008743.3"/>
</dbReference>
<dbReference type="RefSeq" id="NP_001307807.1">
    <molecule id="Q6IMI6-2"/>
    <property type="nucleotide sequence ID" value="NM_001320878.2"/>
</dbReference>
<dbReference type="PDB" id="2H8K">
    <property type="method" value="X-ray"/>
    <property type="resolution" value="3.20 A"/>
    <property type="chains" value="A/B=1-304"/>
</dbReference>
<dbReference type="PDB" id="2REO">
    <property type="method" value="X-ray"/>
    <property type="resolution" value="2.65 A"/>
    <property type="chains" value="A=1-304"/>
</dbReference>
<dbReference type="PDBsum" id="2H8K"/>
<dbReference type="PDBsum" id="2REO"/>
<dbReference type="SMR" id="Q6IMI6"/>
<dbReference type="BioGRID" id="137954">
    <property type="interactions" value="10"/>
</dbReference>
<dbReference type="FunCoup" id="Q6IMI6">
    <property type="interactions" value="35"/>
</dbReference>
<dbReference type="IntAct" id="Q6IMI6">
    <property type="interactions" value="3"/>
</dbReference>
<dbReference type="STRING" id="9606.ENSP00000333310"/>
<dbReference type="DrugBank" id="DB12243">
    <property type="generic name" value="Edaravone"/>
</dbReference>
<dbReference type="DrugBank" id="DB12471">
    <property type="generic name" value="Ibrexafungerp"/>
</dbReference>
<dbReference type="DrugBank" id="DB00968">
    <property type="generic name" value="Methyldopa"/>
</dbReference>
<dbReference type="DrugBank" id="DB00960">
    <property type="generic name" value="Pindolol"/>
</dbReference>
<dbReference type="DrugBank" id="DB00867">
    <property type="generic name" value="Ritodrine"/>
</dbReference>
<dbReference type="DrugBank" id="DB00871">
    <property type="generic name" value="Terbutaline"/>
</dbReference>
<dbReference type="SwissLipids" id="SLP:000001649"/>
<dbReference type="GlyGen" id="Q6IMI6">
    <property type="glycosylation" value="1 site, 1 O-linked glycan (1 site)"/>
</dbReference>
<dbReference type="iPTMnet" id="Q6IMI6"/>
<dbReference type="PhosphoSitePlus" id="Q6IMI6"/>
<dbReference type="BioMuta" id="SULT1C3"/>
<dbReference type="DMDM" id="74724707"/>
<dbReference type="jPOST" id="Q6IMI6"/>
<dbReference type="MassIVE" id="Q6IMI6"/>
<dbReference type="PaxDb" id="9606-ENSP00000333310"/>
<dbReference type="PeptideAtlas" id="Q6IMI6"/>
<dbReference type="ProteomicsDB" id="66429">
    <molecule id="Q6IMI6-1"/>
</dbReference>
<dbReference type="ProteomicsDB" id="66430">
    <molecule id="Q6IMI6-2"/>
</dbReference>
<dbReference type="Antibodypedia" id="54777">
    <property type="antibodies" value="62 antibodies from 10 providers"/>
</dbReference>
<dbReference type="DNASU" id="442038"/>
<dbReference type="Ensembl" id="ENST00000329106.3">
    <molecule id="Q6IMI6-1"/>
    <property type="protein sequence ID" value="ENSP00000333310.2"/>
    <property type="gene ID" value="ENSG00000196228.5"/>
</dbReference>
<dbReference type="Ensembl" id="ENST00000681802.2">
    <molecule id="Q6IMI6-2"/>
    <property type="protein sequence ID" value="ENSP00000505748.1"/>
    <property type="gene ID" value="ENSG00000196228.5"/>
</dbReference>
<dbReference type="GeneID" id="442038"/>
<dbReference type="KEGG" id="hsa:442038"/>
<dbReference type="MANE-Select" id="ENST00000681802.2">
    <molecule id="Q6IMI6-2"/>
    <property type="protein sequence ID" value="ENSP00000505748.1"/>
    <property type="RefSeq nucleotide sequence ID" value="NM_001320878.2"/>
    <property type="RefSeq protein sequence ID" value="NP_001307807.1"/>
</dbReference>
<dbReference type="UCSC" id="uc010ywo.2">
    <molecule id="Q6IMI6-1"/>
    <property type="organism name" value="human"/>
</dbReference>
<dbReference type="AGR" id="HGNC:33543"/>
<dbReference type="CTD" id="442038"/>
<dbReference type="DisGeNET" id="442038"/>
<dbReference type="GeneCards" id="SULT1C3"/>
<dbReference type="HGNC" id="HGNC:33543">
    <property type="gene designation" value="SULT1C3"/>
</dbReference>
<dbReference type="HPA" id="ENSG00000196228">
    <property type="expression patterns" value="Tissue enriched (breast)"/>
</dbReference>
<dbReference type="MIM" id="617151">
    <property type="type" value="gene"/>
</dbReference>
<dbReference type="neXtProt" id="NX_Q6IMI6"/>
<dbReference type="OpenTargets" id="ENSG00000196228"/>
<dbReference type="PharmGKB" id="PA162405069"/>
<dbReference type="VEuPathDB" id="HostDB:ENSG00000196228"/>
<dbReference type="eggNOG" id="KOG1584">
    <property type="taxonomic scope" value="Eukaryota"/>
</dbReference>
<dbReference type="GeneTree" id="ENSGT00940000160996"/>
<dbReference type="HOGENOM" id="CLU_027239_1_2_1"/>
<dbReference type="InParanoid" id="Q6IMI6"/>
<dbReference type="OMA" id="CQRANTY"/>
<dbReference type="OrthoDB" id="205623at2759"/>
<dbReference type="PAN-GO" id="Q6IMI6">
    <property type="GO annotations" value="3 GO annotations based on evolutionary models"/>
</dbReference>
<dbReference type="PhylomeDB" id="Q6IMI6"/>
<dbReference type="TreeFam" id="TF321745"/>
<dbReference type="PathwayCommons" id="Q6IMI6"/>
<dbReference type="SignaLink" id="Q6IMI6"/>
<dbReference type="BioGRID-ORCS" id="442038">
    <property type="hits" value="12 hits in 1139 CRISPR screens"/>
</dbReference>
<dbReference type="ChiTaRS" id="SULT1C3">
    <property type="organism name" value="human"/>
</dbReference>
<dbReference type="EvolutionaryTrace" id="Q6IMI6"/>
<dbReference type="GeneWiki" id="SULT1C3"/>
<dbReference type="GenomeRNAi" id="442038"/>
<dbReference type="Pharos" id="Q6IMI6">
    <property type="development level" value="Tbio"/>
</dbReference>
<dbReference type="PRO" id="PR:Q6IMI6"/>
<dbReference type="Proteomes" id="UP000005640">
    <property type="component" value="Chromosome 2"/>
</dbReference>
<dbReference type="RNAct" id="Q6IMI6">
    <property type="molecule type" value="protein"/>
</dbReference>
<dbReference type="Bgee" id="ENSG00000196228">
    <property type="expression patterns" value="Expressed in male germ line stem cell (sensu Vertebrata) in testis and 23 other cell types or tissues"/>
</dbReference>
<dbReference type="GO" id="GO:0005737">
    <property type="term" value="C:cytoplasm"/>
    <property type="evidence" value="ECO:0000318"/>
    <property type="project" value="GO_Central"/>
</dbReference>
<dbReference type="GO" id="GO:0050656">
    <property type="term" value="F:3'-phosphoadenosine 5'-phosphosulfate binding"/>
    <property type="evidence" value="ECO:0000314"/>
    <property type="project" value="UniProtKB"/>
</dbReference>
<dbReference type="GO" id="GO:0004027">
    <property type="term" value="F:alcohol sulfotransferase activity"/>
    <property type="evidence" value="ECO:0000314"/>
    <property type="project" value="UniProtKB"/>
</dbReference>
<dbReference type="GO" id="GO:0004062">
    <property type="term" value="F:aryl sulfotransferase activity"/>
    <property type="evidence" value="ECO:0000314"/>
    <property type="project" value="UniProtKB"/>
</dbReference>
<dbReference type="GO" id="GO:0047704">
    <property type="term" value="F:bile-salt sulfotransferase activity"/>
    <property type="evidence" value="ECO:0000314"/>
    <property type="project" value="UniProtKB"/>
</dbReference>
<dbReference type="GO" id="GO:0050427">
    <property type="term" value="P:3'-phosphoadenosine 5'-phosphosulfate metabolic process"/>
    <property type="evidence" value="ECO:0000314"/>
    <property type="project" value="UniProtKB"/>
</dbReference>
<dbReference type="GO" id="GO:0008203">
    <property type="term" value="P:cholesterol metabolic process"/>
    <property type="evidence" value="ECO:0000314"/>
    <property type="project" value="UniProtKB"/>
</dbReference>
<dbReference type="GO" id="GO:0006629">
    <property type="term" value="P:lipid metabolic process"/>
    <property type="evidence" value="ECO:0007669"/>
    <property type="project" value="UniProtKB-KW"/>
</dbReference>
<dbReference type="GO" id="GO:0051923">
    <property type="term" value="P:sulfation"/>
    <property type="evidence" value="ECO:0000318"/>
    <property type="project" value="GO_Central"/>
</dbReference>
<dbReference type="GO" id="GO:0006790">
    <property type="term" value="P:sulfur compound metabolic process"/>
    <property type="evidence" value="ECO:0000314"/>
    <property type="project" value="UniProtKB"/>
</dbReference>
<dbReference type="GO" id="GO:0006805">
    <property type="term" value="P:xenobiotic metabolic process"/>
    <property type="evidence" value="ECO:0000314"/>
    <property type="project" value="UniProtKB"/>
</dbReference>
<dbReference type="FunFam" id="3.40.50.300:FF:000433">
    <property type="entry name" value="Estrogen sulfotransferase"/>
    <property type="match status" value="1"/>
</dbReference>
<dbReference type="Gene3D" id="3.40.50.300">
    <property type="entry name" value="P-loop containing nucleotide triphosphate hydrolases"/>
    <property type="match status" value="1"/>
</dbReference>
<dbReference type="InterPro" id="IPR027417">
    <property type="entry name" value="P-loop_NTPase"/>
</dbReference>
<dbReference type="InterPro" id="IPR000863">
    <property type="entry name" value="Sulfotransferase_dom"/>
</dbReference>
<dbReference type="PANTHER" id="PTHR11783">
    <property type="entry name" value="SULFOTRANSFERASE SULT"/>
    <property type="match status" value="1"/>
</dbReference>
<dbReference type="Pfam" id="PF00685">
    <property type="entry name" value="Sulfotransfer_1"/>
    <property type="match status" value="1"/>
</dbReference>
<dbReference type="SUPFAM" id="SSF52540">
    <property type="entry name" value="P-loop containing nucleoside triphosphate hydrolases"/>
    <property type="match status" value="1"/>
</dbReference>
<sequence>MAKIEKNAPTMEKKPELFNIMEVDGVPTLILSKEWWEKVCNFQAKPDDLILATYPKSGTTWMHEILDMILNDGDVEKCKRAQTLDRHAFLELKFPHKEKPDLEFVLEMSSPQLIKTHLPSHLIPPSIWKENCKIVYVARNPKDCLVSYYHFHRMASFMPDPQNLEEFYEKFMSGKVVGGSWFDHVKGWWAAKDMHRILYLFYEDIKKDPKREIEKILKFLEKDISEEILNKIIYHTSFDVMKQNPMTNYTTLPTSIMDHSISPFMRKGMPGDWKNYFTVAQNEEFDKDYQKKMAGSTLTFRTEI</sequence>
<feature type="chain" id="PRO_0000249887" description="Sulfotransferase 1C3">
    <location>
        <begin position="1"/>
        <end position="304"/>
    </location>
</feature>
<feature type="active site" description="Proton acceptor" evidence="2">
    <location>
        <position position="117"/>
    </location>
</feature>
<feature type="binding site" evidence="5 9 13 14">
    <location>
        <begin position="56"/>
        <end position="61"/>
    </location>
    <ligand>
        <name>3'-phosphoadenylyl sulfate</name>
        <dbReference type="ChEBI" id="CHEBI:58339"/>
    </ligand>
</feature>
<feature type="binding site" evidence="1">
    <location>
        <begin position="115"/>
        <end position="117"/>
    </location>
    <ligand>
        <name>substrate</name>
    </ligand>
</feature>
<feature type="binding site" evidence="5 9 13 14">
    <location>
        <position position="139"/>
    </location>
    <ligand>
        <name>3'-phosphoadenylyl sulfate</name>
        <dbReference type="ChEBI" id="CHEBI:58339"/>
    </ligand>
</feature>
<feature type="binding site" evidence="5 9 13 14">
    <location>
        <position position="147"/>
    </location>
    <ligand>
        <name>3'-phosphoadenylyl sulfate</name>
        <dbReference type="ChEBI" id="CHEBI:58339"/>
    </ligand>
</feature>
<feature type="binding site" evidence="5 9 13 14">
    <location>
        <position position="202"/>
    </location>
    <ligand>
        <name>3'-phosphoadenylyl sulfate</name>
        <dbReference type="ChEBI" id="CHEBI:58339"/>
    </ligand>
</feature>
<feature type="binding site" evidence="5 9 13 14">
    <location>
        <begin position="236"/>
        <end position="241"/>
    </location>
    <ligand>
        <name>3'-phosphoadenylyl sulfate</name>
        <dbReference type="ChEBI" id="CHEBI:58339"/>
    </ligand>
</feature>
<feature type="binding site" evidence="5 9 13 14">
    <location>
        <begin position="264"/>
        <end position="268"/>
    </location>
    <ligand>
        <name>3'-phosphoadenylyl sulfate</name>
        <dbReference type="ChEBI" id="CHEBI:58339"/>
    </ligand>
</feature>
<feature type="splice variant" id="VSP_020583" description="In isoform 2." evidence="11">
    <original>DPKREIEKILKFLEKDISEEILNKIIYHTSFDVMKQNPMTNYTTLPTSIMDHSISPFMRKGMPGDWKNYFTVAQNEEFDKDYQKKMAGSTLTFRTEI</original>
    <variation>NPKHEIHKVLEFLEKTWSGDVINKIVHHTSFDVMKDNPMANHTAVPAHIFNHSISKFMRKGMPGDWKNHFTVALNENFDKHYEKKMAGSTLNFCLEI</variation>
    <location>
        <begin position="208"/>
        <end position="304"/>
    </location>
</feature>
<feature type="sequence variant" id="VAR_052519" description="In dbSNP:rs11903659.">
    <original>A</original>
    <variation>T</variation>
    <location>
        <position position="88"/>
    </location>
</feature>
<feature type="sequence variant" id="VAR_033732" description="In dbSNP:rs17035911.">
    <original>Y</original>
    <variation>C</variation>
    <location>
        <position position="148"/>
    </location>
</feature>
<feature type="sequence variant" id="VAR_033733" description="In dbSNP:rs2219078." evidence="8">
    <original>G</original>
    <variation>R</variation>
    <location>
        <position position="179"/>
    </location>
</feature>
<feature type="sequence variant" id="VAR_033734" description="In dbSNP:rs6722745." evidence="8">
    <original>M</original>
    <variation>T</variation>
    <location>
        <position position="194"/>
    </location>
</feature>
<feature type="strand" evidence="15">
    <location>
        <begin position="21"/>
        <end position="23"/>
    </location>
</feature>
<feature type="turn" evidence="15">
    <location>
        <begin position="24"/>
        <end position="27"/>
    </location>
</feature>
<feature type="strand" evidence="15">
    <location>
        <begin position="28"/>
        <end position="30"/>
    </location>
</feature>
<feature type="helix" evidence="15">
    <location>
        <begin position="32"/>
        <end position="39"/>
    </location>
</feature>
<feature type="strand" evidence="16">
    <location>
        <begin position="49"/>
        <end position="53"/>
    </location>
</feature>
<feature type="helix" evidence="16">
    <location>
        <begin position="59"/>
        <end position="70"/>
    </location>
</feature>
<feature type="strand" evidence="16">
    <location>
        <begin position="113"/>
        <end position="116"/>
    </location>
</feature>
<feature type="helix" evidence="16">
    <location>
        <begin position="120"/>
        <end position="122"/>
    </location>
</feature>
<feature type="helix" evidence="16">
    <location>
        <begin position="125"/>
        <end position="129"/>
    </location>
</feature>
<feature type="strand" evidence="16">
    <location>
        <begin position="133"/>
        <end position="138"/>
    </location>
</feature>
<feature type="helix" evidence="16">
    <location>
        <begin position="141"/>
        <end position="154"/>
    </location>
</feature>
<feature type="helix" evidence="16">
    <location>
        <begin position="164"/>
        <end position="173"/>
    </location>
</feature>
<feature type="helix" evidence="16">
    <location>
        <begin position="181"/>
        <end position="191"/>
    </location>
</feature>
<feature type="turn" evidence="16">
    <location>
        <begin position="192"/>
        <end position="194"/>
    </location>
</feature>
<feature type="strand" evidence="16">
    <location>
        <begin position="197"/>
        <end position="201"/>
    </location>
</feature>
<feature type="helix" evidence="16">
    <location>
        <begin position="202"/>
        <end position="207"/>
    </location>
</feature>
<feature type="helix" evidence="16">
    <location>
        <begin position="209"/>
        <end position="220"/>
    </location>
</feature>
<feature type="helix" evidence="16">
    <location>
        <begin position="226"/>
        <end position="235"/>
    </location>
</feature>
<feature type="helix" evidence="16">
    <location>
        <begin position="238"/>
        <end position="242"/>
    </location>
</feature>
<feature type="turn" evidence="16">
    <location>
        <begin position="245"/>
        <end position="247"/>
    </location>
</feature>
<feature type="turn" evidence="16">
    <location>
        <begin position="254"/>
        <end position="256"/>
    </location>
</feature>
<feature type="turn" evidence="16">
    <location>
        <begin position="259"/>
        <end position="261"/>
    </location>
</feature>
<feature type="helix" evidence="16">
    <location>
        <begin position="272"/>
        <end position="275"/>
    </location>
</feature>
<feature type="helix" evidence="16">
    <location>
        <begin position="279"/>
        <end position="292"/>
    </location>
</feature>
<keyword id="KW-0002">3D-structure</keyword>
<keyword id="KW-0025">Alternative splicing</keyword>
<keyword id="KW-0963">Cytoplasm</keyword>
<keyword id="KW-0443">Lipid metabolism</keyword>
<keyword id="KW-1267">Proteomics identification</keyword>
<keyword id="KW-1185">Reference proteome</keyword>
<keyword id="KW-0808">Transferase</keyword>
<name>ST1C3_HUMAN</name>
<gene>
    <name type="primary">SULT1C3</name>
</gene>
<proteinExistence type="evidence at protein level"/>